<feature type="chain" id="PRO_0000091800" description="Hepatocyte nuclear factor 3-gamma">
    <location>
        <begin position="1"/>
        <end position="350"/>
    </location>
</feature>
<feature type="DNA-binding region" description="Fork-head" evidence="2">
    <location>
        <begin position="116"/>
        <end position="207"/>
    </location>
</feature>
<feature type="region of interest" description="Disordered" evidence="3">
    <location>
        <begin position="217"/>
        <end position="276"/>
    </location>
</feature>
<feature type="compositionally biased region" description="Low complexity" evidence="3">
    <location>
        <begin position="226"/>
        <end position="249"/>
    </location>
</feature>
<feature type="compositionally biased region" description="Pro residues" evidence="3">
    <location>
        <begin position="250"/>
        <end position="259"/>
    </location>
</feature>
<feature type="sequence variant" id="VAR_008859" description="In dbSNP:rs758330593.">
    <original>G</original>
    <variation>R</variation>
    <location>
        <position position="91"/>
    </location>
</feature>
<feature type="sequence conflict" description="In Ref. 1; AAA58477." evidence="9" ref="1">
    <location>
        <position position="52"/>
    </location>
</feature>
<feature type="sequence conflict" description="In Ref. 1; AAA58477." evidence="9" ref="1">
    <original>V</original>
    <variation>L</variation>
    <location>
        <position position="83"/>
    </location>
</feature>
<feature type="sequence conflict" description="In Ref. 4; BAD97193." evidence="9" ref="4">
    <original>K</original>
    <variation>M</variation>
    <location>
        <position position="107"/>
    </location>
</feature>
<feature type="sequence conflict" description="In Ref. 1; AAA58477." evidence="9" ref="1">
    <original>RPL</original>
    <variation>AP</variation>
    <location>
        <begin position="111"/>
        <end position="113"/>
    </location>
</feature>
<feature type="sequence conflict" description="In Ref. 1; AAA58477." evidence="9" ref="1">
    <original>M</original>
    <variation>V</variation>
    <location>
        <position position="137"/>
    </location>
</feature>
<feature type="sequence conflict" description="In Ref. 1; AAA58477." evidence="9" ref="1">
    <original>E</original>
    <variation>D</variation>
    <location>
        <position position="156"/>
    </location>
</feature>
<feature type="sequence conflict" description="In Ref. 1; AAA58477." evidence="9" ref="1">
    <original>AT</original>
    <variation>S</variation>
    <location>
        <begin position="227"/>
        <end position="228"/>
    </location>
</feature>
<feature type="sequence conflict" description="In Ref. 1; AAA58477." evidence="9" ref="1">
    <original>E</original>
    <variation>D</variation>
    <location>
        <position position="291"/>
    </location>
</feature>
<feature type="helix" evidence="10">
    <location>
        <begin position="122"/>
        <end position="131"/>
    </location>
</feature>
<feature type="helix" evidence="10">
    <location>
        <begin position="140"/>
        <end position="150"/>
    </location>
</feature>
<feature type="helix" evidence="10">
    <location>
        <begin position="152"/>
        <end position="155"/>
    </location>
</feature>
<feature type="helix" evidence="10">
    <location>
        <begin position="158"/>
        <end position="171"/>
    </location>
</feature>
<feature type="strand" evidence="10">
    <location>
        <begin position="175"/>
        <end position="178"/>
    </location>
</feature>
<feature type="strand" evidence="10">
    <location>
        <begin position="190"/>
        <end position="193"/>
    </location>
</feature>
<feature type="helix" evidence="10">
    <location>
        <begin position="195"/>
        <end position="197"/>
    </location>
</feature>
<feature type="strand" evidence="10">
    <location>
        <begin position="206"/>
        <end position="208"/>
    </location>
</feature>
<organism>
    <name type="scientific">Homo sapiens</name>
    <name type="common">Human</name>
    <dbReference type="NCBI Taxonomy" id="9606"/>
    <lineage>
        <taxon>Eukaryota</taxon>
        <taxon>Metazoa</taxon>
        <taxon>Chordata</taxon>
        <taxon>Craniata</taxon>
        <taxon>Vertebrata</taxon>
        <taxon>Euteleostomi</taxon>
        <taxon>Mammalia</taxon>
        <taxon>Eutheria</taxon>
        <taxon>Euarchontoglires</taxon>
        <taxon>Primates</taxon>
        <taxon>Haplorrhini</taxon>
        <taxon>Catarrhini</taxon>
        <taxon>Hominidae</taxon>
        <taxon>Homo</taxon>
    </lineage>
</organism>
<protein>
    <recommendedName>
        <fullName>Hepatocyte nuclear factor 3-gamma</fullName>
        <shortName>HNF-3-gamma</shortName>
        <shortName>HNF-3G</shortName>
    </recommendedName>
    <alternativeName>
        <fullName>Fork head-related protein FKH H3</fullName>
    </alternativeName>
    <alternativeName>
        <fullName>Forkhead box protein A3</fullName>
    </alternativeName>
    <alternativeName>
        <fullName>Transcription factor 3G</fullName>
        <shortName>TCF-3G</shortName>
    </alternativeName>
</protein>
<evidence type="ECO:0000250" key="1"/>
<evidence type="ECO:0000255" key="2">
    <source>
        <dbReference type="PROSITE-ProRule" id="PRU00089"/>
    </source>
</evidence>
<evidence type="ECO:0000256" key="3">
    <source>
        <dbReference type="SAM" id="MobiDB-lite"/>
    </source>
</evidence>
<evidence type="ECO:0000269" key="4">
    <source>
    </source>
</evidence>
<evidence type="ECO:0000269" key="5">
    <source>
    </source>
</evidence>
<evidence type="ECO:0000269" key="6">
    <source>
    </source>
</evidence>
<evidence type="ECO:0000269" key="7">
    <source>
    </source>
</evidence>
<evidence type="ECO:0000269" key="8">
    <source>
    </source>
</evidence>
<evidence type="ECO:0000305" key="9"/>
<evidence type="ECO:0007829" key="10">
    <source>
        <dbReference type="PDB" id="1VTN"/>
    </source>
</evidence>
<keyword id="KW-0002">3D-structure</keyword>
<keyword id="KW-0010">Activator</keyword>
<keyword id="KW-0156">Chromatin regulator</keyword>
<keyword id="KW-0217">Developmental protein</keyword>
<keyword id="KW-0221">Differentiation</keyword>
<keyword id="KW-0238">DNA-binding</keyword>
<keyword id="KW-0539">Nucleus</keyword>
<keyword id="KW-1267">Proteomics identification</keyword>
<keyword id="KW-1185">Reference proteome</keyword>
<keyword id="KW-0744">Spermatogenesis</keyword>
<keyword id="KW-0804">Transcription</keyword>
<keyword id="KW-0805">Transcription regulation</keyword>
<sequence length="350" mass="37140">MLGSVKMEAHDLAEWSYYPEAGEVYSPVTPVPTMAPLNSYMTLNPLSSPYPPGGLPASPLPSGPLAPPAPAAPLGPTFPGLGVSGGSSSSGYGAPGPGLVHGKEMPKGYRRPLAHAKPPYSYISLITMAIQQAPGKMLTLSEIYQWIMDLFPYYRENQQRWQNSIRHSLSFNDCFVKVARSPDKPGKGSYWALHPSSGNMFENGCYLRRQKRFKLEEKVKKGGSGAATTTRNGTGSAASTTTPAATVTSPPQPPPPAPEPEAQGGEDVGALDCGSPASSTPYFTGLELPGELKLDAPYNFNHPFSINNLMSEQTPAPPKLDVGFGGYGAEGGEPGVYYQGLYSRSLLNAS</sequence>
<gene>
    <name type="primary">FOXA3</name>
    <name type="synonym">HNF3G</name>
    <name type="synonym">TCF3G</name>
</gene>
<dbReference type="EMBL" id="L12141">
    <property type="protein sequence ID" value="AAA58477.1"/>
    <property type="molecule type" value="mRNA"/>
</dbReference>
<dbReference type="EMBL" id="AF176114">
    <property type="protein sequence ID" value="AAD51980.1"/>
    <property type="molecule type" value="Genomic_DNA"/>
</dbReference>
<dbReference type="EMBL" id="AF176113">
    <property type="protein sequence ID" value="AAD51980.1"/>
    <property type="status" value="JOINED"/>
    <property type="molecule type" value="Genomic_DNA"/>
</dbReference>
<dbReference type="EMBL" id="BT006720">
    <property type="protein sequence ID" value="AAP35366.1"/>
    <property type="molecule type" value="mRNA"/>
</dbReference>
<dbReference type="EMBL" id="AK223473">
    <property type="protein sequence ID" value="BAD97193.1"/>
    <property type="molecule type" value="mRNA"/>
</dbReference>
<dbReference type="EMBL" id="EU275778">
    <property type="protein sequence ID" value="ABX44664.1"/>
    <property type="molecule type" value="Genomic_DNA"/>
</dbReference>
<dbReference type="EMBL" id="CH471126">
    <property type="protein sequence ID" value="EAW57394.1"/>
    <property type="molecule type" value="Genomic_DNA"/>
</dbReference>
<dbReference type="EMBL" id="BC016024">
    <property type="protein sequence ID" value="AAH16024.1"/>
    <property type="molecule type" value="mRNA"/>
</dbReference>
<dbReference type="CCDS" id="CCDS12677.1"/>
<dbReference type="PIR" id="C48924">
    <property type="entry name" value="C48924"/>
</dbReference>
<dbReference type="RefSeq" id="NP_004488.2">
    <property type="nucleotide sequence ID" value="NM_004497.2"/>
</dbReference>
<dbReference type="PDB" id="1VTN">
    <property type="method" value="X-ray"/>
    <property type="resolution" value="2.50 A"/>
    <property type="chains" value="C=115-215"/>
</dbReference>
<dbReference type="PDBsum" id="1VTN"/>
<dbReference type="SMR" id="P55318"/>
<dbReference type="BioGRID" id="109413">
    <property type="interactions" value="52"/>
</dbReference>
<dbReference type="FunCoup" id="P55318">
    <property type="interactions" value="541"/>
</dbReference>
<dbReference type="IntAct" id="P55318">
    <property type="interactions" value="51"/>
</dbReference>
<dbReference type="MINT" id="P55318"/>
<dbReference type="STRING" id="9606.ENSP00000304004"/>
<dbReference type="GlyGen" id="P55318">
    <property type="glycosylation" value="1 site"/>
</dbReference>
<dbReference type="iPTMnet" id="P55318"/>
<dbReference type="PhosphoSitePlus" id="P55318"/>
<dbReference type="BioMuta" id="FOXA3"/>
<dbReference type="DMDM" id="8247938"/>
<dbReference type="jPOST" id="P55318"/>
<dbReference type="MassIVE" id="P55318"/>
<dbReference type="PaxDb" id="9606-ENSP00000304004"/>
<dbReference type="PeptideAtlas" id="P55318"/>
<dbReference type="ProteomicsDB" id="56846"/>
<dbReference type="Antibodypedia" id="4191">
    <property type="antibodies" value="92 antibodies from 25 providers"/>
</dbReference>
<dbReference type="DNASU" id="3171"/>
<dbReference type="Ensembl" id="ENST00000302177.3">
    <property type="protein sequence ID" value="ENSP00000304004.1"/>
    <property type="gene ID" value="ENSG00000170608.3"/>
</dbReference>
<dbReference type="GeneID" id="3171"/>
<dbReference type="KEGG" id="hsa:3171"/>
<dbReference type="MANE-Select" id="ENST00000302177.3">
    <property type="protein sequence ID" value="ENSP00000304004.1"/>
    <property type="RefSeq nucleotide sequence ID" value="NM_004497.3"/>
    <property type="RefSeq protein sequence ID" value="NP_004488.2"/>
</dbReference>
<dbReference type="UCSC" id="uc002pdr.3">
    <property type="organism name" value="human"/>
</dbReference>
<dbReference type="AGR" id="HGNC:5023"/>
<dbReference type="CTD" id="3171"/>
<dbReference type="DisGeNET" id="3171"/>
<dbReference type="GeneCards" id="FOXA3"/>
<dbReference type="HGNC" id="HGNC:5023">
    <property type="gene designation" value="FOXA3"/>
</dbReference>
<dbReference type="HPA" id="ENSG00000170608">
    <property type="expression patterns" value="Group enriched (intestine, liver, pancreas, stomach)"/>
</dbReference>
<dbReference type="MIM" id="602295">
    <property type="type" value="gene"/>
</dbReference>
<dbReference type="neXtProt" id="NX_P55318"/>
<dbReference type="OpenTargets" id="ENSG00000170608"/>
<dbReference type="PharmGKB" id="PA201092"/>
<dbReference type="VEuPathDB" id="HostDB:ENSG00000170608"/>
<dbReference type="eggNOG" id="KOG3563">
    <property type="taxonomic scope" value="Eukaryota"/>
</dbReference>
<dbReference type="GeneTree" id="ENSGT00940000162453"/>
<dbReference type="HOGENOM" id="CLU_027910_0_0_1"/>
<dbReference type="InParanoid" id="P55318"/>
<dbReference type="OMA" id="SHDISEW"/>
<dbReference type="OrthoDB" id="5954824at2759"/>
<dbReference type="PAN-GO" id="P55318">
    <property type="GO annotations" value="5 GO annotations based on evolutionary models"/>
</dbReference>
<dbReference type="PhylomeDB" id="P55318"/>
<dbReference type="TreeFam" id="TF316127"/>
<dbReference type="PathwayCommons" id="P55318"/>
<dbReference type="Reactome" id="R-HSA-210745">
    <property type="pathway name" value="Regulation of gene expression in beta cells"/>
</dbReference>
<dbReference type="SignaLink" id="P55318"/>
<dbReference type="BioGRID-ORCS" id="3171">
    <property type="hits" value="26 hits in 1186 CRISPR screens"/>
</dbReference>
<dbReference type="ChiTaRS" id="FOXA3">
    <property type="organism name" value="human"/>
</dbReference>
<dbReference type="GeneWiki" id="FOXA3"/>
<dbReference type="GenomeRNAi" id="3171"/>
<dbReference type="Pharos" id="P55318">
    <property type="development level" value="Tbio"/>
</dbReference>
<dbReference type="PRO" id="PR:P55318"/>
<dbReference type="Proteomes" id="UP000005640">
    <property type="component" value="Chromosome 19"/>
</dbReference>
<dbReference type="RNAct" id="P55318">
    <property type="molecule type" value="protein"/>
</dbReference>
<dbReference type="Bgee" id="ENSG00000170608">
    <property type="expression patterns" value="Expressed in ileal mucosa and 76 other cell types or tissues"/>
</dbReference>
<dbReference type="ExpressionAtlas" id="P55318">
    <property type="expression patterns" value="baseline and differential"/>
</dbReference>
<dbReference type="GO" id="GO:0015629">
    <property type="term" value="C:actin cytoskeleton"/>
    <property type="evidence" value="ECO:0000314"/>
    <property type="project" value="HPA"/>
</dbReference>
<dbReference type="GO" id="GO:0000785">
    <property type="term" value="C:chromatin"/>
    <property type="evidence" value="ECO:0000247"/>
    <property type="project" value="NTNU_SB"/>
</dbReference>
<dbReference type="GO" id="GO:0005654">
    <property type="term" value="C:nucleoplasm"/>
    <property type="evidence" value="ECO:0000314"/>
    <property type="project" value="HPA"/>
</dbReference>
<dbReference type="GO" id="GO:0005634">
    <property type="term" value="C:nucleus"/>
    <property type="evidence" value="ECO:0000304"/>
    <property type="project" value="ProtInc"/>
</dbReference>
<dbReference type="GO" id="GO:0003700">
    <property type="term" value="F:DNA-binding transcription factor activity"/>
    <property type="evidence" value="ECO:0000314"/>
    <property type="project" value="UniProtKB"/>
</dbReference>
<dbReference type="GO" id="GO:0000981">
    <property type="term" value="F:DNA-binding transcription factor activity, RNA polymerase II-specific"/>
    <property type="evidence" value="ECO:0000247"/>
    <property type="project" value="NTNU_SB"/>
</dbReference>
<dbReference type="GO" id="GO:0019904">
    <property type="term" value="F:protein domain specific binding"/>
    <property type="evidence" value="ECO:0007669"/>
    <property type="project" value="InterPro"/>
</dbReference>
<dbReference type="GO" id="GO:0000978">
    <property type="term" value="F:RNA polymerase II cis-regulatory region sequence-specific DNA binding"/>
    <property type="evidence" value="ECO:0000318"/>
    <property type="project" value="GO_Central"/>
</dbReference>
<dbReference type="GO" id="GO:1990837">
    <property type="term" value="F:sequence-specific double-stranded DNA binding"/>
    <property type="evidence" value="ECO:0000314"/>
    <property type="project" value="ARUK-UCL"/>
</dbReference>
<dbReference type="GO" id="GO:0000976">
    <property type="term" value="F:transcription cis-regulatory region binding"/>
    <property type="evidence" value="ECO:0000315"/>
    <property type="project" value="UniProtKB"/>
</dbReference>
<dbReference type="GO" id="GO:0009653">
    <property type="term" value="P:anatomical structure morphogenesis"/>
    <property type="evidence" value="ECO:0000318"/>
    <property type="project" value="GO_Central"/>
</dbReference>
<dbReference type="GO" id="GO:0030154">
    <property type="term" value="P:cell differentiation"/>
    <property type="evidence" value="ECO:0000318"/>
    <property type="project" value="GO_Central"/>
</dbReference>
<dbReference type="GO" id="GO:0009267">
    <property type="term" value="P:cellular response to starvation"/>
    <property type="evidence" value="ECO:0007669"/>
    <property type="project" value="Ensembl"/>
</dbReference>
<dbReference type="GO" id="GO:0006325">
    <property type="term" value="P:chromatin organization"/>
    <property type="evidence" value="ECO:0007669"/>
    <property type="project" value="UniProtKB-KW"/>
</dbReference>
<dbReference type="GO" id="GO:0061484">
    <property type="term" value="P:hematopoietic stem cell homeostasis"/>
    <property type="evidence" value="ECO:0007669"/>
    <property type="project" value="Ensembl"/>
</dbReference>
<dbReference type="GO" id="GO:0001678">
    <property type="term" value="P:intracellular glucose homeostasis"/>
    <property type="evidence" value="ECO:0000304"/>
    <property type="project" value="UniProtKB"/>
</dbReference>
<dbReference type="GO" id="GO:0045944">
    <property type="term" value="P:positive regulation of transcription by RNA polymerase II"/>
    <property type="evidence" value="ECO:0000314"/>
    <property type="project" value="UniProtKB"/>
</dbReference>
<dbReference type="GO" id="GO:0006357">
    <property type="term" value="P:regulation of transcription by RNA polymerase II"/>
    <property type="evidence" value="ECO:0000318"/>
    <property type="project" value="GO_Central"/>
</dbReference>
<dbReference type="GO" id="GO:0007283">
    <property type="term" value="P:spermatogenesis"/>
    <property type="evidence" value="ECO:0007669"/>
    <property type="project" value="UniProtKB-KW"/>
</dbReference>
<dbReference type="GO" id="GO:0006366">
    <property type="term" value="P:transcription by RNA polymerase II"/>
    <property type="evidence" value="ECO:0007669"/>
    <property type="project" value="Ensembl"/>
</dbReference>
<dbReference type="CDD" id="cd20040">
    <property type="entry name" value="FH_FOXA3"/>
    <property type="match status" value="1"/>
</dbReference>
<dbReference type="FunFam" id="1.10.10.10:FF:000042">
    <property type="entry name" value="hepatocyte nuclear factor 3-beta"/>
    <property type="match status" value="1"/>
</dbReference>
<dbReference type="Gene3D" id="1.10.10.10">
    <property type="entry name" value="Winged helix-like DNA-binding domain superfamily/Winged helix DNA-binding domain"/>
    <property type="match status" value="1"/>
</dbReference>
<dbReference type="InterPro" id="IPR047366">
    <property type="entry name" value="FH_FOXA3"/>
</dbReference>
<dbReference type="InterPro" id="IPR013638">
    <property type="entry name" value="Fork-head_N"/>
</dbReference>
<dbReference type="InterPro" id="IPR001766">
    <property type="entry name" value="Fork_head_dom"/>
</dbReference>
<dbReference type="InterPro" id="IPR050211">
    <property type="entry name" value="FOX_domain-containing"/>
</dbReference>
<dbReference type="InterPro" id="IPR018122">
    <property type="entry name" value="TF_fork_head_CS_1"/>
</dbReference>
<dbReference type="InterPro" id="IPR030456">
    <property type="entry name" value="TF_fork_head_CS_2"/>
</dbReference>
<dbReference type="InterPro" id="IPR036388">
    <property type="entry name" value="WH-like_DNA-bd_sf"/>
</dbReference>
<dbReference type="InterPro" id="IPR036390">
    <property type="entry name" value="WH_DNA-bd_sf"/>
</dbReference>
<dbReference type="PANTHER" id="PTHR11829">
    <property type="entry name" value="FORKHEAD BOX PROTEIN"/>
    <property type="match status" value="1"/>
</dbReference>
<dbReference type="PANTHER" id="PTHR11829:SF201">
    <property type="entry name" value="HEPATOCYTE NUCLEAR FACTOR 3-GAMMA"/>
    <property type="match status" value="1"/>
</dbReference>
<dbReference type="Pfam" id="PF00250">
    <property type="entry name" value="Forkhead"/>
    <property type="match status" value="1"/>
</dbReference>
<dbReference type="Pfam" id="PF08430">
    <property type="entry name" value="Forkhead_N"/>
    <property type="match status" value="1"/>
</dbReference>
<dbReference type="PRINTS" id="PR00053">
    <property type="entry name" value="FORKHEAD"/>
</dbReference>
<dbReference type="SMART" id="SM00339">
    <property type="entry name" value="FH"/>
    <property type="match status" value="1"/>
</dbReference>
<dbReference type="SUPFAM" id="SSF46785">
    <property type="entry name" value="Winged helix' DNA-binding domain"/>
    <property type="match status" value="1"/>
</dbReference>
<dbReference type="PROSITE" id="PS00657">
    <property type="entry name" value="FORK_HEAD_1"/>
    <property type="match status" value="1"/>
</dbReference>
<dbReference type="PROSITE" id="PS00658">
    <property type="entry name" value="FORK_HEAD_2"/>
    <property type="match status" value="1"/>
</dbReference>
<dbReference type="PROSITE" id="PS50039">
    <property type="entry name" value="FORK_HEAD_3"/>
    <property type="match status" value="1"/>
</dbReference>
<comment type="function">
    <text evidence="1 4">Transcription factor that is thought to act as a 'pioneer' factor opening the compacted chromatin for other proteins through interactions with nucleosomal core histones and thereby replacing linker histones at target enhancer and/or promoter sites (By similarity). Originally described as a transcription activator for a number of liver genes such as AFP, albumin, tyrosine aminotransferase, PEPCK, etc. Interacts with the cis-acting regulatory regions of these genes. Involved in glucose homeostasis; binds to and activates transcription from the G6PC1 promoter. Binds to the CYP3A4 promoter and activates its transcription in cooperation with CEBPA. Binds to the CYP3A7 promoter together with members of the CTF/NF-I family. Involved in regulation of neuronal-specific transcription. May be involved in regulation of spermatogenesis.</text>
</comment>
<comment type="subunit">
    <text evidence="6 7">Interacts with FOXA2.</text>
</comment>
<comment type="interaction">
    <interactant intactId="EBI-3910364">
        <id>P55318</id>
    </interactant>
    <interactant intactId="EBI-25837549">
        <id>P28329-3</id>
        <label>CHAT</label>
    </interactant>
    <organismsDiffer>false</organismsDiffer>
    <experiments>3</experiments>
</comment>
<comment type="interaction">
    <interactant intactId="EBI-3910364">
        <id>P55318</id>
    </interactant>
    <interactant intactId="EBI-348399">
        <id>P22607</id>
        <label>FGFR3</label>
    </interactant>
    <organismsDiffer>false</organismsDiffer>
    <experiments>3</experiments>
</comment>
<comment type="subcellular location">
    <subcellularLocation>
        <location evidence="2 5">Nucleus</location>
    </subcellularLocation>
</comment>
<comment type="tissue specificity">
    <text evidence="8">Expressed in erythroleukemia and hepatoma cell lines and in liver and pancreas. Not expressed in any other cell lines or tissues examined.</text>
</comment>
<comment type="developmental stage">
    <text evidence="5">Detected in prenatal liver nuclear extracts (12.4-27 weeks estimated gestational age). Not detected in postnatal liver samples.</text>
</comment>
<comment type="online information" name="Wikipedia">
    <link uri="https://en.wikipedia.org/wiki/Hepatocyte_nuclear_factors"/>
    <text>Hepatocyte nuclear factors entry</text>
</comment>
<reference key="1">
    <citation type="journal article" date="1993" name="Blood">
        <title>Drosophila forkhead homologues are expressed in a lineage-restricted manner in human hematopoietic cells.</title>
        <authorList>
            <person name="Hromas R."/>
            <person name="Moore J."/>
            <person name="Johnston T."/>
            <person name="Socha C."/>
            <person name="Klemsz M."/>
        </authorList>
    </citation>
    <scope>NUCLEOTIDE SEQUENCE [MRNA]</scope>
    <scope>TISSUE SPECIFICITY</scope>
    <source>
        <tissue>Liver</tissue>
    </source>
</reference>
<reference key="2">
    <citation type="journal article" date="2000" name="Hum. Hered.">
        <title>The human HNF-3 genes: cloning, partial sequence and mutation screening in patients with impaired glucose homeostasis.</title>
        <authorList>
            <person name="Navas M.A."/>
            <person name="Vaisse C."/>
            <person name="Boger S."/>
            <person name="Heimesaat M."/>
            <person name="Kollee L.A."/>
            <person name="Stoffel M."/>
        </authorList>
    </citation>
    <scope>NUCLEOTIDE SEQUENCE [GENOMIC DNA]</scope>
</reference>
<reference key="3">
    <citation type="submission" date="2003-05" db="EMBL/GenBank/DDBJ databases">
        <title>Cloning of human full-length CDSs in BD Creator(TM) system donor vector.</title>
        <authorList>
            <person name="Kalnine N."/>
            <person name="Chen X."/>
            <person name="Rolfs A."/>
            <person name="Halleck A."/>
            <person name="Hines L."/>
            <person name="Eisenstein S."/>
            <person name="Koundinya M."/>
            <person name="Raphael J."/>
            <person name="Moreira D."/>
            <person name="Kelley T."/>
            <person name="LaBaer J."/>
            <person name="Lin Y."/>
            <person name="Phelan M."/>
            <person name="Farmer A."/>
        </authorList>
    </citation>
    <scope>NUCLEOTIDE SEQUENCE [LARGE SCALE MRNA]</scope>
</reference>
<reference key="4">
    <citation type="submission" date="2005-04" db="EMBL/GenBank/DDBJ databases">
        <authorList>
            <person name="Totoki Y."/>
            <person name="Toyoda A."/>
            <person name="Takeda T."/>
            <person name="Sakaki Y."/>
            <person name="Tanaka A."/>
            <person name="Yokoyama S."/>
        </authorList>
    </citation>
    <scope>NUCLEOTIDE SEQUENCE [LARGE SCALE MRNA]</scope>
    <source>
        <tissue>Gastric mucosa</tissue>
    </source>
</reference>
<reference key="5">
    <citation type="submission" date="2007-11" db="EMBL/GenBank/DDBJ databases">
        <authorList>
            <consortium name="SeattleSNPs variation discovery resource"/>
        </authorList>
    </citation>
    <scope>NUCLEOTIDE SEQUENCE [GENOMIC DNA]</scope>
</reference>
<reference key="6">
    <citation type="submission" date="2005-07" db="EMBL/GenBank/DDBJ databases">
        <authorList>
            <person name="Mural R.J."/>
            <person name="Istrail S."/>
            <person name="Sutton G.G."/>
            <person name="Florea L."/>
            <person name="Halpern A.L."/>
            <person name="Mobarry C.M."/>
            <person name="Lippert R."/>
            <person name="Walenz B."/>
            <person name="Shatkay H."/>
            <person name="Dew I."/>
            <person name="Miller J.R."/>
            <person name="Flanigan M.J."/>
            <person name="Edwards N.J."/>
            <person name="Bolanos R."/>
            <person name="Fasulo D."/>
            <person name="Halldorsson B.V."/>
            <person name="Hannenhalli S."/>
            <person name="Turner R."/>
            <person name="Yooseph S."/>
            <person name="Lu F."/>
            <person name="Nusskern D.R."/>
            <person name="Shue B.C."/>
            <person name="Zheng X.H."/>
            <person name="Zhong F."/>
            <person name="Delcher A.L."/>
            <person name="Huson D.H."/>
            <person name="Kravitz S.A."/>
            <person name="Mouchard L."/>
            <person name="Reinert K."/>
            <person name="Remington K.A."/>
            <person name="Clark A.G."/>
            <person name="Waterman M.S."/>
            <person name="Eichler E.E."/>
            <person name="Adams M.D."/>
            <person name="Hunkapiller M.W."/>
            <person name="Myers E.W."/>
            <person name="Venter J.C."/>
        </authorList>
    </citation>
    <scope>NUCLEOTIDE SEQUENCE [LARGE SCALE GENOMIC DNA]</scope>
</reference>
<reference key="7">
    <citation type="journal article" date="2004" name="Genome Res.">
        <title>The status, quality, and expansion of the NIH full-length cDNA project: the Mammalian Gene Collection (MGC).</title>
        <authorList>
            <consortium name="The MGC Project Team"/>
        </authorList>
    </citation>
    <scope>NUCLEOTIDE SEQUENCE [LARGE SCALE MRNA]</scope>
    <source>
        <tissue>Uterus</tissue>
    </source>
</reference>
<reference key="8">
    <citation type="journal article" date="1997" name="Biochemistry">
        <title>The role of HNF1alpha, HNF3gamma, and cyclic AMP in glucose-6-phosphatase gene activation.</title>
        <authorList>
            <person name="Lin B."/>
            <person name="Morris D.W."/>
            <person name="Chou J.Y."/>
        </authorList>
    </citation>
    <scope>PROMOTER BINDING</scope>
</reference>
<reference key="9">
    <citation type="journal article" date="2003" name="Mol. Pharmacol.">
        <title>Transcriptional regulation of human CYP3A4 basal expression by CCAAT enhancer-binding protein alpha and hepatocyte nuclear factor-3 gamma.</title>
        <authorList>
            <person name="Rodriguez-Antona C."/>
            <person name="Bort R."/>
            <person name="Jover R."/>
            <person name="Tindberg N."/>
            <person name="Ingelman-Sundberg M."/>
            <person name="Gomez-Lechon M.J."/>
            <person name="Castell J.V."/>
        </authorList>
    </citation>
    <scope>FUNCTION</scope>
</reference>
<reference key="10">
    <citation type="journal article" date="2009" name="Genome Biol.">
        <title>Differential binding and co-binding pattern of FOXA1 and FOXA3 and their relation to H3K4me3 in HepG2 cells revealed by ChIP-seq.</title>
        <authorList>
            <person name="Motallebipour M."/>
            <person name="Ameur A."/>
            <person name="Reddy Bysani M.S."/>
            <person name="Patra K."/>
            <person name="Wallerman O."/>
            <person name="Mangion J."/>
            <person name="Barker M.A."/>
            <person name="McKernan K.J."/>
            <person name="Komorowski J."/>
            <person name="Wadelius C."/>
        </authorList>
    </citation>
    <scope>INTERACTION WITH FOXA2</scope>
</reference>
<reference key="11">
    <citation type="journal article" date="2009" name="Mol. Pharmacol.">
        <title>Regulation of the CYP3A4 and CYP3A7 promoters by members of the nuclear factor I transcription factor family.</title>
        <authorList>
            <person name="Riffel A.K."/>
            <person name="Schuenemann E."/>
            <person name="Vyhlidal C.A."/>
        </authorList>
    </citation>
    <scope>PROMOTER-BINDING</scope>
    <scope>SUBCELLULAR LOCATION</scope>
    <scope>DEVELOPMENTAL STAGE</scope>
</reference>
<reference key="12">
    <citation type="journal article" date="1993" name="Nature">
        <title>Co-crystal structure of the HNF-3/fork head DNA-recognition motif resembles histone H5.</title>
        <authorList>
            <person name="Clark K.L."/>
            <person name="Halay E.D."/>
            <person name="Lai E."/>
            <person name="Burley S.K."/>
        </authorList>
    </citation>
    <scope>X-RAY CRYSTALLOGRAPHY (2.5 ANGSTROMS) OF 115-215 IN COMPLEX WITH DNA</scope>
</reference>
<accession>P55318</accession>
<accession>A9LYI5</accession>
<accession>Q53F16</accession>
<accession>Q9UMW9</accession>
<proteinExistence type="evidence at protein level"/>
<name>FOXA3_HUMAN</name>